<name>PTHP_STRSA</name>
<proteinExistence type="evidence at protein level"/>
<sequence length="19" mass="2031">AIKVFHIVAETGIHARPAT</sequence>
<feature type="chain" id="PRO_0000107884" description="Phosphocarrier protein HPr">
    <location>
        <begin position="1"/>
        <end position="19" status="greater than"/>
    </location>
</feature>
<feature type="domain" description="HPr" evidence="2">
    <location>
        <begin position="1"/>
        <end position="19"/>
    </location>
</feature>
<feature type="active site" description="Pros-phosphohistidine intermediate" evidence="2">
    <location>
        <position position="14"/>
    </location>
</feature>
<feature type="non-terminal residue">
    <location>
        <position position="19"/>
    </location>
</feature>
<accession>P24365</accession>
<reference key="1">
    <citation type="journal article" date="1989" name="J. Gen. Microbiol.">
        <title>Properties of a phosphocarrier protein (HPr) extracted from intact cells of Streptococcus sanguis.</title>
        <authorList>
            <person name="Jenkinson H.F."/>
        </authorList>
    </citation>
    <scope>PROTEIN SEQUENCE</scope>
</reference>
<organism>
    <name type="scientific">Streptococcus sanguinis</name>
    <dbReference type="NCBI Taxonomy" id="1305"/>
    <lineage>
        <taxon>Bacteria</taxon>
        <taxon>Bacillati</taxon>
        <taxon>Bacillota</taxon>
        <taxon>Bacilli</taxon>
        <taxon>Lactobacillales</taxon>
        <taxon>Streptococcaceae</taxon>
        <taxon>Streptococcus</taxon>
    </lineage>
</organism>
<comment type="function">
    <text evidence="1">General (non sugar-specific) component of the phosphoenolpyruvate-dependent sugar phosphotransferase system (sugar PTS). This major carbohydrate active-transport system catalyzes the phosphorylation of incoming sugar substrates concomitantly with their translocation across the cell membrane. The phosphoryl group from phosphoenolpyruvate (PEP) is transferred to the phosphoryl carrier protein HPr by enzyme I. Phospho-HPr then transfers it to the PTS EIIA domain.</text>
</comment>
<comment type="function">
    <text evidence="1">P-Ser-HPr interacts with the catabolite control protein A (CcpA), forming a complex that binds to DNA at the catabolite response elements cre, operator sites preceding a large number of catabolite-regulated genes. Thus, P-Ser-HPr is a corepressor in carbon catabolite repression (CCR), a mechanism that allows bacteria to coordinate and optimize the utilization of available carbon sources. P-Ser-HPr also plays a role in inducer exclusion, in which it probably interacts with several non-PTS permeases and inhibits their transport activity (By similarity).</text>
</comment>
<comment type="subcellular location">
    <subcellularLocation>
        <location>Cytoplasm</location>
    </subcellularLocation>
</comment>
<comment type="similarity">
    <text evidence="3">Belongs to the HPr family.</text>
</comment>
<keyword id="KW-0963">Cytoplasm</keyword>
<keyword id="KW-0903">Direct protein sequencing</keyword>
<keyword id="KW-0598">Phosphotransferase system</keyword>
<keyword id="KW-0762">Sugar transport</keyword>
<keyword id="KW-0804">Transcription</keyword>
<keyword id="KW-0805">Transcription regulation</keyword>
<keyword id="KW-0813">Transport</keyword>
<evidence type="ECO:0000250" key="1"/>
<evidence type="ECO:0000255" key="2">
    <source>
        <dbReference type="PROSITE-ProRule" id="PRU00681"/>
    </source>
</evidence>
<evidence type="ECO:0000305" key="3"/>
<dbReference type="GO" id="GO:0005737">
    <property type="term" value="C:cytoplasm"/>
    <property type="evidence" value="ECO:0007669"/>
    <property type="project" value="UniProtKB-SubCell"/>
</dbReference>
<dbReference type="GO" id="GO:0009401">
    <property type="term" value="P:phosphoenolpyruvate-dependent sugar phosphotransferase system"/>
    <property type="evidence" value="ECO:0007669"/>
    <property type="project" value="UniProtKB-KW"/>
</dbReference>
<dbReference type="InterPro" id="IPR000032">
    <property type="entry name" value="HPr-like"/>
</dbReference>
<dbReference type="InterPro" id="IPR001020">
    <property type="entry name" value="PTS_HPr_His_P_site"/>
</dbReference>
<dbReference type="PROSITE" id="PS51350">
    <property type="entry name" value="PTS_HPR_DOM"/>
    <property type="match status" value="1"/>
</dbReference>
<dbReference type="PROSITE" id="PS00369">
    <property type="entry name" value="PTS_HPR_HIS"/>
    <property type="match status" value="1"/>
</dbReference>
<protein>
    <recommendedName>
        <fullName>Phosphocarrier protein HPr</fullName>
    </recommendedName>
    <alternativeName>
        <fullName>Histidine-containing protein</fullName>
    </alternativeName>
</protein>
<gene>
    <name type="primary">ptsH</name>
</gene>